<protein>
    <recommendedName>
        <fullName evidence="1">Ribosome-recycling factor</fullName>
        <shortName evidence="1">RRF</shortName>
    </recommendedName>
    <alternativeName>
        <fullName evidence="1">Ribosome-releasing factor</fullName>
    </alternativeName>
</protein>
<dbReference type="EMBL" id="BA000017">
    <property type="protein sequence ID" value="BAB57421.1"/>
    <property type="molecule type" value="Genomic_DNA"/>
</dbReference>
<dbReference type="RefSeq" id="WP_001280006.1">
    <property type="nucleotide sequence ID" value="NC_002758.2"/>
</dbReference>
<dbReference type="SMR" id="P68785"/>
<dbReference type="KEGG" id="sav:SAV1259"/>
<dbReference type="HOGENOM" id="CLU_073981_2_0_9"/>
<dbReference type="PhylomeDB" id="P68785"/>
<dbReference type="Proteomes" id="UP000002481">
    <property type="component" value="Chromosome"/>
</dbReference>
<dbReference type="GO" id="GO:0005737">
    <property type="term" value="C:cytoplasm"/>
    <property type="evidence" value="ECO:0007669"/>
    <property type="project" value="UniProtKB-SubCell"/>
</dbReference>
<dbReference type="GO" id="GO:0043023">
    <property type="term" value="F:ribosomal large subunit binding"/>
    <property type="evidence" value="ECO:0007669"/>
    <property type="project" value="TreeGrafter"/>
</dbReference>
<dbReference type="GO" id="GO:0006415">
    <property type="term" value="P:translational termination"/>
    <property type="evidence" value="ECO:0007669"/>
    <property type="project" value="UniProtKB-UniRule"/>
</dbReference>
<dbReference type="CDD" id="cd00520">
    <property type="entry name" value="RRF"/>
    <property type="match status" value="1"/>
</dbReference>
<dbReference type="FunFam" id="1.10.132.20:FF:000001">
    <property type="entry name" value="Ribosome-recycling factor"/>
    <property type="match status" value="1"/>
</dbReference>
<dbReference type="FunFam" id="3.30.1360.40:FF:000001">
    <property type="entry name" value="Ribosome-recycling factor"/>
    <property type="match status" value="1"/>
</dbReference>
<dbReference type="Gene3D" id="3.30.1360.40">
    <property type="match status" value="1"/>
</dbReference>
<dbReference type="Gene3D" id="1.10.132.20">
    <property type="entry name" value="Ribosome-recycling factor"/>
    <property type="match status" value="1"/>
</dbReference>
<dbReference type="HAMAP" id="MF_00040">
    <property type="entry name" value="RRF"/>
    <property type="match status" value="1"/>
</dbReference>
<dbReference type="InterPro" id="IPR002661">
    <property type="entry name" value="Ribosome_recyc_fac"/>
</dbReference>
<dbReference type="InterPro" id="IPR023584">
    <property type="entry name" value="Ribosome_recyc_fac_dom"/>
</dbReference>
<dbReference type="InterPro" id="IPR036191">
    <property type="entry name" value="RRF_sf"/>
</dbReference>
<dbReference type="NCBIfam" id="TIGR00496">
    <property type="entry name" value="frr"/>
    <property type="match status" value="1"/>
</dbReference>
<dbReference type="PANTHER" id="PTHR20982:SF3">
    <property type="entry name" value="MITOCHONDRIAL RIBOSOME RECYCLING FACTOR PSEUDO 1"/>
    <property type="match status" value="1"/>
</dbReference>
<dbReference type="PANTHER" id="PTHR20982">
    <property type="entry name" value="RIBOSOME RECYCLING FACTOR"/>
    <property type="match status" value="1"/>
</dbReference>
<dbReference type="Pfam" id="PF01765">
    <property type="entry name" value="RRF"/>
    <property type="match status" value="1"/>
</dbReference>
<dbReference type="SUPFAM" id="SSF55194">
    <property type="entry name" value="Ribosome recycling factor, RRF"/>
    <property type="match status" value="1"/>
</dbReference>
<keyword id="KW-0963">Cytoplasm</keyword>
<keyword id="KW-0648">Protein biosynthesis</keyword>
<name>RRF_STAAM</name>
<feature type="chain" id="PRO_0000167539" description="Ribosome-recycling factor">
    <location>
        <begin position="1"/>
        <end position="184"/>
    </location>
</feature>
<feature type="region of interest" description="Disordered" evidence="2">
    <location>
        <begin position="134"/>
        <end position="167"/>
    </location>
</feature>
<evidence type="ECO:0000255" key="1">
    <source>
        <dbReference type="HAMAP-Rule" id="MF_00040"/>
    </source>
</evidence>
<evidence type="ECO:0000256" key="2">
    <source>
        <dbReference type="SAM" id="MobiDB-lite"/>
    </source>
</evidence>
<gene>
    <name evidence="1" type="primary">frr</name>
    <name type="ordered locus">SAV1259</name>
</gene>
<accession>P68785</accession>
<accession>O33276</accession>
<organism>
    <name type="scientific">Staphylococcus aureus (strain Mu50 / ATCC 700699)</name>
    <dbReference type="NCBI Taxonomy" id="158878"/>
    <lineage>
        <taxon>Bacteria</taxon>
        <taxon>Bacillati</taxon>
        <taxon>Bacillota</taxon>
        <taxon>Bacilli</taxon>
        <taxon>Bacillales</taxon>
        <taxon>Staphylococcaceae</taxon>
        <taxon>Staphylococcus</taxon>
    </lineage>
</organism>
<comment type="function">
    <text evidence="1">Responsible for the release of ribosomes from messenger RNA at the termination of protein biosynthesis. May increase the efficiency of translation by recycling ribosomes from one round of translation to another.</text>
</comment>
<comment type="subcellular location">
    <subcellularLocation>
        <location evidence="1">Cytoplasm</location>
    </subcellularLocation>
</comment>
<comment type="similarity">
    <text evidence="1">Belongs to the RRF family.</text>
</comment>
<reference key="1">
    <citation type="journal article" date="2001" name="Lancet">
        <title>Whole genome sequencing of meticillin-resistant Staphylococcus aureus.</title>
        <authorList>
            <person name="Kuroda M."/>
            <person name="Ohta T."/>
            <person name="Uchiyama I."/>
            <person name="Baba T."/>
            <person name="Yuzawa H."/>
            <person name="Kobayashi I."/>
            <person name="Cui L."/>
            <person name="Oguchi A."/>
            <person name="Aoki K."/>
            <person name="Nagai Y."/>
            <person name="Lian J.-Q."/>
            <person name="Ito T."/>
            <person name="Kanamori M."/>
            <person name="Matsumaru H."/>
            <person name="Maruyama A."/>
            <person name="Murakami H."/>
            <person name="Hosoyama A."/>
            <person name="Mizutani-Ui Y."/>
            <person name="Takahashi N.K."/>
            <person name="Sawano T."/>
            <person name="Inoue R."/>
            <person name="Kaito C."/>
            <person name="Sekimizu K."/>
            <person name="Hirakawa H."/>
            <person name="Kuhara S."/>
            <person name="Goto S."/>
            <person name="Yabuzaki J."/>
            <person name="Kanehisa M."/>
            <person name="Yamashita A."/>
            <person name="Oshima K."/>
            <person name="Furuya K."/>
            <person name="Yoshino C."/>
            <person name="Shiba T."/>
            <person name="Hattori M."/>
            <person name="Ogasawara N."/>
            <person name="Hayashi H."/>
            <person name="Hiramatsu K."/>
        </authorList>
    </citation>
    <scope>NUCLEOTIDE SEQUENCE [LARGE SCALE GENOMIC DNA]</scope>
    <source>
        <strain>Mu50 / ATCC 700699</strain>
    </source>
</reference>
<proteinExistence type="inferred from homology"/>
<sequence length="184" mass="20353">MSDIINETKSRMQKSIESLSRELANISAGRANSNLLNGVTVDYYGAPTPVQQLASINVPEARLLVISPYDKTSVADIEKAIIAANLGVNPTSDGEVIRIAVPALTEERRKERVKDVKKIGEEAKVSVRNIRRDMNDQLKKDEKNGDITEDELRSGTEDVQKATDNSIKEIDQMIADKEKDIMSV</sequence>